<reference key="1">
    <citation type="journal article" date="2006" name="J. Biol. Chem.">
        <title>Identification of fungal sphingolipid C9-methyltransferases by phylogenetic profiling.</title>
        <authorList>
            <person name="Ternes P."/>
            <person name="Sperling P."/>
            <person name="Albrecht S."/>
            <person name="Franke S."/>
            <person name="Cregg J.M."/>
            <person name="Warnecke D."/>
            <person name="Heinz E."/>
        </authorList>
    </citation>
    <scope>NUCLEOTIDE SEQUENCE [GENOMIC DNA]</scope>
    <scope>FUNCTION</scope>
    <scope>CATALYTIC ACTIVITY</scope>
    <scope>PATHWAY</scope>
    <source>
        <strain>GS115 / ATCC 20864</strain>
    </source>
</reference>
<reference key="2">
    <citation type="journal article" date="2009" name="Nat. Biotechnol.">
        <title>Genome sequence of the recombinant protein production host Pichia pastoris.</title>
        <authorList>
            <person name="De Schutter K."/>
            <person name="Lin Y.-C."/>
            <person name="Tiels P."/>
            <person name="Van Hecke A."/>
            <person name="Glinka S."/>
            <person name="Weber-Lehmann J."/>
            <person name="Rouze P."/>
            <person name="Van de Peer Y."/>
            <person name="Callewaert N."/>
        </authorList>
    </citation>
    <scope>NUCLEOTIDE SEQUENCE [LARGE SCALE GENOMIC DNA]</scope>
    <source>
        <strain>GS115 / ATCC 20864</strain>
    </source>
</reference>
<name>DEGS_KOMPG</name>
<protein>
    <recommendedName>
        <fullName evidence="1">Sphingolipid delta(4)-desaturase</fullName>
        <ecNumber evidence="6">1.14.19.17</ecNumber>
    </recommendedName>
    <alternativeName>
        <fullName evidence="4">Delta 4-(E)-sphingolipid desaturase</fullName>
    </alternativeName>
    <alternativeName>
        <fullName evidence="1">Dihydroceramide desaturase</fullName>
    </alternativeName>
</protein>
<sequence>MITHRSNNVQYEVTPPSVEEDLGPQFEFYWTRQKDPHSIRRKLILAKHPEVAKLCGPEWRTKYIASAVVLLQLSIAYALKNTPVLSFKFLALAYVVGATANQNCFLCIHELSHNLAFRKPLHNKLFAIWVNLPIGVPYSASFQPYHQLHHKFLGDEVLDTDLPTPLEATVLSSLLGKAFFATFQIFFYALRPMMVTSIDMTFIHLLNVLVCLVSDFILIKFGSANSLWYLILSSFFAGSLHPTAGHFIAEHYLLDPPKHYTQFQDVPPLETYSYYGMLNLFTWNVGYHNEHHDFPFIAWSKLPLLRTIAHDFYQPLPKHTSWVRVIVDFIFDENVLMYNRVKRETAKDKSVDSKTTKTQS</sequence>
<organism>
    <name type="scientific">Komagataella phaffii (strain GS115 / ATCC 20864)</name>
    <name type="common">Yeast</name>
    <name type="synonym">Pichia pastoris</name>
    <dbReference type="NCBI Taxonomy" id="644223"/>
    <lineage>
        <taxon>Eukaryota</taxon>
        <taxon>Fungi</taxon>
        <taxon>Dikarya</taxon>
        <taxon>Ascomycota</taxon>
        <taxon>Saccharomycotina</taxon>
        <taxon>Pichiomycetes</taxon>
        <taxon>Pichiales</taxon>
        <taxon>Pichiaceae</taxon>
        <taxon>Komagataella</taxon>
    </lineage>
</organism>
<dbReference type="EC" id="1.14.19.17" evidence="6"/>
<dbReference type="EMBL" id="AY700778">
    <property type="protein sequence ID" value="AAU10085.1"/>
    <property type="molecule type" value="Genomic_DNA"/>
</dbReference>
<dbReference type="EMBL" id="FN392321">
    <property type="protein sequence ID" value="CAY70999.1"/>
    <property type="status" value="ALT_FRAME"/>
    <property type="molecule type" value="Genomic_DNA"/>
</dbReference>
<dbReference type="RefSeq" id="XP_002493178.1">
    <property type="nucleotide sequence ID" value="XM_002493133.1"/>
</dbReference>
<dbReference type="STRING" id="644223.C4R613"/>
<dbReference type="GeneID" id="8200290"/>
<dbReference type="KEGG" id="ppa:PAS_chr3_0939"/>
<dbReference type="eggNOG" id="KOG2987">
    <property type="taxonomic scope" value="Eukaryota"/>
</dbReference>
<dbReference type="HOGENOM" id="CLU_032156_0_0_1"/>
<dbReference type="InParanoid" id="C4R613"/>
<dbReference type="OrthoDB" id="200948at2759"/>
<dbReference type="UniPathway" id="UPA00222"/>
<dbReference type="Proteomes" id="UP000000314">
    <property type="component" value="Chromosome 3"/>
</dbReference>
<dbReference type="GO" id="GO:0016020">
    <property type="term" value="C:membrane"/>
    <property type="evidence" value="ECO:0007669"/>
    <property type="project" value="UniProtKB-SubCell"/>
</dbReference>
<dbReference type="GO" id="GO:0042284">
    <property type="term" value="F:sphingolipid delta-4 desaturase activity"/>
    <property type="evidence" value="ECO:0007669"/>
    <property type="project" value="UniProtKB-EC"/>
</dbReference>
<dbReference type="GO" id="GO:0046513">
    <property type="term" value="P:ceramide biosynthetic process"/>
    <property type="evidence" value="ECO:0007669"/>
    <property type="project" value="TreeGrafter"/>
</dbReference>
<dbReference type="CDD" id="cd03508">
    <property type="entry name" value="Delta4-sphingolipid-FADS-like"/>
    <property type="match status" value="1"/>
</dbReference>
<dbReference type="InterPro" id="IPR011388">
    <property type="entry name" value="DES1/DES2"/>
</dbReference>
<dbReference type="InterPro" id="IPR005804">
    <property type="entry name" value="FA_desaturase_dom"/>
</dbReference>
<dbReference type="InterPro" id="IPR013866">
    <property type="entry name" value="Sphingolipid_d4-desaturase_N"/>
</dbReference>
<dbReference type="PANTHER" id="PTHR12879">
    <property type="entry name" value="SPHINGOLIPID DELTA 4 DESATURASE/C-4 HYDROXYLASE PROTEIN DES2"/>
    <property type="match status" value="1"/>
</dbReference>
<dbReference type="PANTHER" id="PTHR12879:SF8">
    <property type="entry name" value="SPHINGOLIPID DELTA(4)-DESATURASE DES1"/>
    <property type="match status" value="1"/>
</dbReference>
<dbReference type="Pfam" id="PF00487">
    <property type="entry name" value="FA_desaturase"/>
    <property type="match status" value="1"/>
</dbReference>
<dbReference type="Pfam" id="PF08557">
    <property type="entry name" value="Lipid_DES"/>
    <property type="match status" value="1"/>
</dbReference>
<dbReference type="PIRSF" id="PIRSF017228">
    <property type="entry name" value="Sphnglp_dlt4_des"/>
    <property type="match status" value="1"/>
</dbReference>
<dbReference type="SMART" id="SM01269">
    <property type="entry name" value="Lipid_DES"/>
    <property type="match status" value="1"/>
</dbReference>
<proteinExistence type="evidence at protein level"/>
<keyword id="KW-0443">Lipid metabolism</keyword>
<keyword id="KW-0472">Membrane</keyword>
<keyword id="KW-0560">Oxidoreductase</keyword>
<keyword id="KW-1185">Reference proteome</keyword>
<keyword id="KW-0746">Sphingolipid metabolism</keyword>
<keyword id="KW-0812">Transmembrane</keyword>
<keyword id="KW-1133">Transmembrane helix</keyword>
<accession>C4R613</accession>
<accession>Q66VZ4</accession>
<feature type="chain" id="PRO_0000434802" description="Sphingolipid delta(4)-desaturase">
    <location>
        <begin position="1"/>
        <end position="360"/>
    </location>
</feature>
<feature type="transmembrane region" description="Helical" evidence="2">
    <location>
        <begin position="67"/>
        <end position="87"/>
    </location>
</feature>
<feature type="transmembrane region" description="Helical" evidence="2">
    <location>
        <begin position="89"/>
        <end position="109"/>
    </location>
</feature>
<feature type="transmembrane region" description="Helical" evidence="2">
    <location>
        <begin position="125"/>
        <end position="145"/>
    </location>
</feature>
<feature type="transmembrane region" description="Helical" evidence="2">
    <location>
        <begin position="170"/>
        <end position="190"/>
    </location>
</feature>
<feature type="transmembrane region" description="Helical" evidence="2">
    <location>
        <begin position="202"/>
        <end position="222"/>
    </location>
</feature>
<feature type="transmembrane region" description="Helical" evidence="2">
    <location>
        <begin position="228"/>
        <end position="248"/>
    </location>
</feature>
<feature type="short sequence motif" description="Histidine box-1" evidence="5">
    <location>
        <begin position="109"/>
        <end position="113"/>
    </location>
</feature>
<feature type="short sequence motif" description="Histidine box-2" evidence="5">
    <location>
        <begin position="146"/>
        <end position="150"/>
    </location>
</feature>
<feature type="short sequence motif" description="Histidine box-3" evidence="5">
    <location>
        <begin position="288"/>
        <end position="292"/>
    </location>
</feature>
<comment type="function">
    <text evidence="3">Delta(4)-fatty-acid desaturase which introduces a double bond at the 4-position in the long-chain base (LCB) of ceramides. Required for the formation of the monounsaturated sphingoid base (E)-sphing-4-enine during glucosylceramide (GluCer) biosynthesis.</text>
</comment>
<comment type="catalytic activity">
    <reaction evidence="6">
        <text>an N-acylsphinganine + 2 Fe(II)-[cytochrome b5] + O2 + 2 H(+) = an N-acylsphing-4-enine + 2 Fe(III)-[cytochrome b5] + 2 H2O</text>
        <dbReference type="Rhea" id="RHEA:46544"/>
        <dbReference type="Rhea" id="RHEA-COMP:10438"/>
        <dbReference type="Rhea" id="RHEA-COMP:10439"/>
        <dbReference type="ChEBI" id="CHEBI:15377"/>
        <dbReference type="ChEBI" id="CHEBI:15378"/>
        <dbReference type="ChEBI" id="CHEBI:15379"/>
        <dbReference type="ChEBI" id="CHEBI:29033"/>
        <dbReference type="ChEBI" id="CHEBI:29034"/>
        <dbReference type="ChEBI" id="CHEBI:31488"/>
        <dbReference type="ChEBI" id="CHEBI:52639"/>
        <dbReference type="EC" id="1.14.19.17"/>
    </reaction>
</comment>
<comment type="pathway">
    <text evidence="6">Lipid metabolism; sphingolipid metabolism.</text>
</comment>
<comment type="subcellular location">
    <subcellularLocation>
        <location evidence="2">Membrane</location>
        <topology evidence="2">Multi-pass membrane protein</topology>
    </subcellularLocation>
</comment>
<comment type="similarity">
    <text evidence="5">Belongs to the fatty acid desaturase type 1 family. DEGS subfamily.</text>
</comment>
<comment type="sequence caution" evidence="5">
    <conflict type="frameshift">
        <sequence resource="EMBL-CDS" id="CAY70999"/>
    </conflict>
</comment>
<evidence type="ECO:0000250" key="1">
    <source>
        <dbReference type="UniProtKB" id="Q5AJX2"/>
    </source>
</evidence>
<evidence type="ECO:0000255" key="2"/>
<evidence type="ECO:0000269" key="3">
    <source>
    </source>
</evidence>
<evidence type="ECO:0000303" key="4">
    <source>
    </source>
</evidence>
<evidence type="ECO:0000305" key="5"/>
<evidence type="ECO:0000305" key="6">
    <source>
    </source>
</evidence>
<gene>
    <name type="ordered locus">PAS_chr3_0939</name>
</gene>